<evidence type="ECO:0000255" key="1">
    <source>
        <dbReference type="HAMAP-Rule" id="MF_01337"/>
    </source>
</evidence>
<evidence type="ECO:0000305" key="2"/>
<dbReference type="EMBL" id="CP000958">
    <property type="protein sequence ID" value="ACA89523.1"/>
    <property type="molecule type" value="Genomic_DNA"/>
</dbReference>
<dbReference type="RefSeq" id="WP_006477183.1">
    <property type="nucleotide sequence ID" value="NC_010508.1"/>
</dbReference>
<dbReference type="SMR" id="B1JU38"/>
<dbReference type="GeneID" id="98107144"/>
<dbReference type="KEGG" id="bcm:Bcenmc03_0343"/>
<dbReference type="HOGENOM" id="CLU_098841_0_1_4"/>
<dbReference type="Proteomes" id="UP000002169">
    <property type="component" value="Chromosome 1"/>
</dbReference>
<dbReference type="GO" id="GO:0022625">
    <property type="term" value="C:cytosolic large ribosomal subunit"/>
    <property type="evidence" value="ECO:0007669"/>
    <property type="project" value="TreeGrafter"/>
</dbReference>
<dbReference type="GO" id="GO:0008097">
    <property type="term" value="F:5S rRNA binding"/>
    <property type="evidence" value="ECO:0007669"/>
    <property type="project" value="TreeGrafter"/>
</dbReference>
<dbReference type="GO" id="GO:0003735">
    <property type="term" value="F:structural constituent of ribosome"/>
    <property type="evidence" value="ECO:0007669"/>
    <property type="project" value="InterPro"/>
</dbReference>
<dbReference type="GO" id="GO:0006412">
    <property type="term" value="P:translation"/>
    <property type="evidence" value="ECO:0007669"/>
    <property type="project" value="UniProtKB-UniRule"/>
</dbReference>
<dbReference type="CDD" id="cd00432">
    <property type="entry name" value="Ribosomal_L18_L5e"/>
    <property type="match status" value="1"/>
</dbReference>
<dbReference type="FunFam" id="3.30.420.100:FF:000001">
    <property type="entry name" value="50S ribosomal protein L18"/>
    <property type="match status" value="1"/>
</dbReference>
<dbReference type="Gene3D" id="3.30.420.100">
    <property type="match status" value="1"/>
</dbReference>
<dbReference type="HAMAP" id="MF_01337_B">
    <property type="entry name" value="Ribosomal_uL18_B"/>
    <property type="match status" value="1"/>
</dbReference>
<dbReference type="InterPro" id="IPR004389">
    <property type="entry name" value="Ribosomal_uL18_bac-type"/>
</dbReference>
<dbReference type="InterPro" id="IPR005484">
    <property type="entry name" value="Ribosomal_uL18_bac/euk"/>
</dbReference>
<dbReference type="NCBIfam" id="TIGR00060">
    <property type="entry name" value="L18_bact"/>
    <property type="match status" value="1"/>
</dbReference>
<dbReference type="PANTHER" id="PTHR12899">
    <property type="entry name" value="39S RIBOSOMAL PROTEIN L18, MITOCHONDRIAL"/>
    <property type="match status" value="1"/>
</dbReference>
<dbReference type="PANTHER" id="PTHR12899:SF3">
    <property type="entry name" value="LARGE RIBOSOMAL SUBUNIT PROTEIN UL18M"/>
    <property type="match status" value="1"/>
</dbReference>
<dbReference type="Pfam" id="PF00861">
    <property type="entry name" value="Ribosomal_L18p"/>
    <property type="match status" value="1"/>
</dbReference>
<dbReference type="SUPFAM" id="SSF53137">
    <property type="entry name" value="Translational machinery components"/>
    <property type="match status" value="1"/>
</dbReference>
<proteinExistence type="inferred from homology"/>
<gene>
    <name evidence="1" type="primary">rplR</name>
    <name type="ordered locus">Bcenmc03_0343</name>
</gene>
<sequence length="121" mass="13106">MDKTQSRLRRARQTRIKIAELQVARLAVHRTNTHIYAQVFSPCGTKVLASASTLEAEVRAELADKSGKGGNVNAATLIGKRIAEKAKAAGIESVAFDRSGFRYHGRVKALAEAAREAGLKF</sequence>
<accession>B1JU38</accession>
<protein>
    <recommendedName>
        <fullName evidence="1">Large ribosomal subunit protein uL18</fullName>
    </recommendedName>
    <alternativeName>
        <fullName evidence="2">50S ribosomal protein L18</fullName>
    </alternativeName>
</protein>
<reference key="1">
    <citation type="submission" date="2008-02" db="EMBL/GenBank/DDBJ databases">
        <title>Complete sequence of chromosome 1 of Burkholderia cenocepacia MC0-3.</title>
        <authorList>
            <person name="Copeland A."/>
            <person name="Lucas S."/>
            <person name="Lapidus A."/>
            <person name="Barry K."/>
            <person name="Bruce D."/>
            <person name="Goodwin L."/>
            <person name="Glavina del Rio T."/>
            <person name="Dalin E."/>
            <person name="Tice H."/>
            <person name="Pitluck S."/>
            <person name="Chain P."/>
            <person name="Malfatti S."/>
            <person name="Shin M."/>
            <person name="Vergez L."/>
            <person name="Schmutz J."/>
            <person name="Larimer F."/>
            <person name="Land M."/>
            <person name="Hauser L."/>
            <person name="Kyrpides N."/>
            <person name="Mikhailova N."/>
            <person name="Tiedje J."/>
            <person name="Richardson P."/>
        </authorList>
    </citation>
    <scope>NUCLEOTIDE SEQUENCE [LARGE SCALE GENOMIC DNA]</scope>
    <source>
        <strain>MC0-3</strain>
    </source>
</reference>
<organism>
    <name type="scientific">Burkholderia orbicola (strain MC0-3)</name>
    <dbReference type="NCBI Taxonomy" id="406425"/>
    <lineage>
        <taxon>Bacteria</taxon>
        <taxon>Pseudomonadati</taxon>
        <taxon>Pseudomonadota</taxon>
        <taxon>Betaproteobacteria</taxon>
        <taxon>Burkholderiales</taxon>
        <taxon>Burkholderiaceae</taxon>
        <taxon>Burkholderia</taxon>
        <taxon>Burkholderia cepacia complex</taxon>
        <taxon>Burkholderia orbicola</taxon>
    </lineage>
</organism>
<keyword id="KW-0687">Ribonucleoprotein</keyword>
<keyword id="KW-0689">Ribosomal protein</keyword>
<keyword id="KW-0694">RNA-binding</keyword>
<keyword id="KW-0699">rRNA-binding</keyword>
<name>RL18_BURO0</name>
<comment type="function">
    <text evidence="1">This is one of the proteins that bind and probably mediate the attachment of the 5S RNA into the large ribosomal subunit, where it forms part of the central protuberance.</text>
</comment>
<comment type="subunit">
    <text evidence="1">Part of the 50S ribosomal subunit; part of the 5S rRNA/L5/L18/L25 subcomplex. Contacts the 5S and 23S rRNAs.</text>
</comment>
<comment type="similarity">
    <text evidence="1">Belongs to the universal ribosomal protein uL18 family.</text>
</comment>
<feature type="chain" id="PRO_1000142630" description="Large ribosomal subunit protein uL18">
    <location>
        <begin position="1"/>
        <end position="121"/>
    </location>
</feature>